<comment type="function">
    <text>Regulates transcription in association with TATA binding protein (TBP). Removes TBP from the TATA box in an ATP-dependent manner.</text>
</comment>
<comment type="subunit">
    <text>Associates with TBP to form B-TFIID. Binds DRAP1.</text>
</comment>
<comment type="subcellular location">
    <subcellularLocation>
        <location>Nucleus</location>
    </subcellularLocation>
</comment>
<comment type="alternative products">
    <event type="alternative splicing"/>
    <isoform>
        <id>O14981-1</id>
        <name>1</name>
        <sequence type="displayed"/>
    </isoform>
    <isoform>
        <id>O14981-2</id>
        <name>2</name>
        <sequence type="described" ref="VSP_056510"/>
    </isoform>
</comment>
<comment type="similarity">
    <text evidence="6">Belongs to the SNF2/RAD54 helicase family.</text>
</comment>
<keyword id="KW-0025">Alternative splicing</keyword>
<keyword id="KW-0067">ATP-binding</keyword>
<keyword id="KW-0903">Direct protein sequencing</keyword>
<keyword id="KW-0238">DNA-binding</keyword>
<keyword id="KW-0347">Helicase</keyword>
<keyword id="KW-0378">Hydrolase</keyword>
<keyword id="KW-0547">Nucleotide-binding</keyword>
<keyword id="KW-0539">Nucleus</keyword>
<keyword id="KW-0597">Phosphoprotein</keyword>
<keyword id="KW-1267">Proteomics identification</keyword>
<keyword id="KW-1185">Reference proteome</keyword>
<keyword id="KW-0677">Repeat</keyword>
<feature type="chain" id="PRO_0000074311" description="TATA-binding protein-associated factor 172">
    <location>
        <begin position="1"/>
        <end position="1849"/>
    </location>
</feature>
<feature type="repeat" description="HEAT 1">
    <location>
        <begin position="385"/>
        <end position="422"/>
    </location>
</feature>
<feature type="repeat" description="HEAT 2">
    <location>
        <begin position="426"/>
        <end position="463"/>
    </location>
</feature>
<feature type="repeat" description="HEAT 3">
    <location>
        <begin position="513"/>
        <end position="550"/>
    </location>
</feature>
<feature type="repeat" description="HEAT 4">
    <location>
        <begin position="554"/>
        <end position="596"/>
    </location>
</feature>
<feature type="repeat" description="HEAT 5">
    <location>
        <begin position="818"/>
        <end position="855"/>
    </location>
</feature>
<feature type="repeat" description="HEAT 6">
    <location>
        <begin position="872"/>
        <end position="910"/>
    </location>
</feature>
<feature type="repeat" description="HEAT 7">
    <location>
        <begin position="1102"/>
        <end position="1139"/>
    </location>
</feature>
<feature type="repeat" description="HEAT 8">
    <location>
        <begin position="1182"/>
        <end position="1219"/>
    </location>
</feature>
<feature type="domain" description="Helicase ATP-binding" evidence="2">
    <location>
        <begin position="1278"/>
        <end position="1453"/>
    </location>
</feature>
<feature type="domain" description="Helicase C-terminal" evidence="3">
    <location>
        <begin position="1636"/>
        <end position="1790"/>
    </location>
</feature>
<feature type="region of interest" description="Disordered" evidence="4">
    <location>
        <begin position="77"/>
        <end position="97"/>
    </location>
</feature>
<feature type="region of interest" description="Disordered" evidence="4">
    <location>
        <begin position="219"/>
        <end position="247"/>
    </location>
</feature>
<feature type="short sequence motif" description="Nuclear localization signal" evidence="1">
    <location>
        <begin position="191"/>
        <end position="207"/>
    </location>
</feature>
<feature type="short sequence motif" description="DEGH box">
    <location>
        <begin position="1404"/>
        <end position="1407"/>
    </location>
</feature>
<feature type="compositionally biased region" description="Polar residues" evidence="4">
    <location>
        <begin position="85"/>
        <end position="97"/>
    </location>
</feature>
<feature type="compositionally biased region" description="Basic and acidic residues" evidence="4">
    <location>
        <begin position="223"/>
        <end position="236"/>
    </location>
</feature>
<feature type="binding site" evidence="2">
    <location>
        <begin position="1291"/>
        <end position="1298"/>
    </location>
    <ligand>
        <name>ATP</name>
        <dbReference type="ChEBI" id="CHEBI:30616"/>
    </ligand>
</feature>
<feature type="modified residue" description="Phosphoserine" evidence="7">
    <location>
        <position position="91"/>
    </location>
</feature>
<feature type="modified residue" description="Phosphoserine" evidence="7">
    <location>
        <position position="95"/>
    </location>
</feature>
<feature type="splice variant" id="VSP_056510" description="In isoform 2." evidence="5">
    <location>
        <begin position="1"/>
        <end position="1172"/>
    </location>
</feature>
<accession>O14981</accession>
<accession>B4E0W6</accession>
<accession>O43578</accession>
<dbReference type="EC" id="3.6.4.-"/>
<dbReference type="EMBL" id="AJ001017">
    <property type="protein sequence ID" value="CAA04475.1"/>
    <property type="molecule type" value="mRNA"/>
</dbReference>
<dbReference type="EMBL" id="AF038362">
    <property type="protein sequence ID" value="AAC04573.1"/>
    <property type="molecule type" value="mRNA"/>
</dbReference>
<dbReference type="EMBL" id="AK303554">
    <property type="protein sequence ID" value="BAG64578.1"/>
    <property type="molecule type" value="mRNA"/>
</dbReference>
<dbReference type="EMBL" id="AL359198">
    <property type="status" value="NOT_ANNOTATED_CDS"/>
    <property type="molecule type" value="Genomic_DNA"/>
</dbReference>
<dbReference type="EMBL" id="AL365398">
    <property type="status" value="NOT_ANNOTATED_CDS"/>
    <property type="molecule type" value="Genomic_DNA"/>
</dbReference>
<dbReference type="EMBL" id="AF166118">
    <property type="protein sequence ID" value="AAF37803.1"/>
    <property type="molecule type" value="Genomic_DNA"/>
</dbReference>
<dbReference type="CCDS" id="CCDS7419.1">
    <molecule id="O14981-1"/>
</dbReference>
<dbReference type="RefSeq" id="NP_003963.1">
    <molecule id="O14981-1"/>
    <property type="nucleotide sequence ID" value="NM_003972.3"/>
</dbReference>
<dbReference type="SMR" id="O14981"/>
<dbReference type="BioGRID" id="114506">
    <property type="interactions" value="156"/>
</dbReference>
<dbReference type="FunCoup" id="O14981">
    <property type="interactions" value="5010"/>
</dbReference>
<dbReference type="IntAct" id="O14981">
    <property type="interactions" value="94"/>
</dbReference>
<dbReference type="MINT" id="O14981"/>
<dbReference type="STRING" id="9606.ENSP00000265990"/>
<dbReference type="GlyGen" id="O14981">
    <property type="glycosylation" value="1 site, 1 O-linked glycan (1 site)"/>
</dbReference>
<dbReference type="iPTMnet" id="O14981"/>
<dbReference type="MetOSite" id="O14981"/>
<dbReference type="PhosphoSitePlus" id="O14981"/>
<dbReference type="SwissPalm" id="O14981"/>
<dbReference type="BioMuta" id="BTAF1"/>
<dbReference type="jPOST" id="O14981"/>
<dbReference type="MassIVE" id="O14981"/>
<dbReference type="PaxDb" id="9606-ENSP00000265990"/>
<dbReference type="PeptideAtlas" id="O14981"/>
<dbReference type="ProteomicsDB" id="48357">
    <molecule id="O14981-1"/>
</dbReference>
<dbReference type="ProteomicsDB" id="5702"/>
<dbReference type="Pumba" id="O14981"/>
<dbReference type="Antibodypedia" id="16397">
    <property type="antibodies" value="160 antibodies from 22 providers"/>
</dbReference>
<dbReference type="DNASU" id="9044"/>
<dbReference type="Ensembl" id="ENST00000265990.12">
    <molecule id="O14981-1"/>
    <property type="protein sequence ID" value="ENSP00000265990.6"/>
    <property type="gene ID" value="ENSG00000095564.15"/>
</dbReference>
<dbReference type="GeneID" id="9044"/>
<dbReference type="KEGG" id="hsa:9044"/>
<dbReference type="MANE-Select" id="ENST00000265990.12">
    <property type="protein sequence ID" value="ENSP00000265990.6"/>
    <property type="RefSeq nucleotide sequence ID" value="NM_003972.3"/>
    <property type="RefSeq protein sequence ID" value="NP_003963.1"/>
</dbReference>
<dbReference type="AGR" id="HGNC:17307"/>
<dbReference type="CTD" id="9044"/>
<dbReference type="DisGeNET" id="9044"/>
<dbReference type="GeneCards" id="BTAF1"/>
<dbReference type="HGNC" id="HGNC:17307">
    <property type="gene designation" value="BTAF1"/>
</dbReference>
<dbReference type="HPA" id="ENSG00000095564">
    <property type="expression patterns" value="Low tissue specificity"/>
</dbReference>
<dbReference type="MalaCards" id="BTAF1"/>
<dbReference type="MIM" id="605191">
    <property type="type" value="gene"/>
</dbReference>
<dbReference type="neXtProt" id="NX_O14981"/>
<dbReference type="OpenTargets" id="ENSG00000095564"/>
<dbReference type="PharmGKB" id="PA25437"/>
<dbReference type="VEuPathDB" id="HostDB:ENSG00000095564"/>
<dbReference type="eggNOG" id="KOG0392">
    <property type="taxonomic scope" value="Eukaryota"/>
</dbReference>
<dbReference type="GeneTree" id="ENSGT00940000157500"/>
<dbReference type="HOGENOM" id="CLU_000315_1_1_1"/>
<dbReference type="InParanoid" id="O14981"/>
<dbReference type="OMA" id="WYSDIAC"/>
<dbReference type="OrthoDB" id="10252227at2759"/>
<dbReference type="PAN-GO" id="O14981">
    <property type="GO annotations" value="0 GO annotations based on evolutionary models"/>
</dbReference>
<dbReference type="PhylomeDB" id="O14981"/>
<dbReference type="TreeFam" id="TF300546"/>
<dbReference type="PathwayCommons" id="O14981"/>
<dbReference type="SignaLink" id="O14981"/>
<dbReference type="SIGNOR" id="O14981"/>
<dbReference type="BioGRID-ORCS" id="9044">
    <property type="hits" value="343 hits in 1159 CRISPR screens"/>
</dbReference>
<dbReference type="ChiTaRS" id="BTAF1">
    <property type="organism name" value="human"/>
</dbReference>
<dbReference type="GeneWiki" id="BTAF1"/>
<dbReference type="GenomeRNAi" id="9044"/>
<dbReference type="Pharos" id="O14981">
    <property type="development level" value="Tbio"/>
</dbReference>
<dbReference type="PRO" id="PR:O14981"/>
<dbReference type="Proteomes" id="UP000005640">
    <property type="component" value="Chromosome 10"/>
</dbReference>
<dbReference type="RNAct" id="O14981">
    <property type="molecule type" value="protein"/>
</dbReference>
<dbReference type="Bgee" id="ENSG00000095564">
    <property type="expression patterns" value="Expressed in endothelial cell and 209 other cell types or tissues"/>
</dbReference>
<dbReference type="ExpressionAtlas" id="O14981">
    <property type="expression patterns" value="baseline and differential"/>
</dbReference>
<dbReference type="GO" id="GO:0043231">
    <property type="term" value="C:intracellular membrane-bounded organelle"/>
    <property type="evidence" value="ECO:0000314"/>
    <property type="project" value="HPA"/>
</dbReference>
<dbReference type="GO" id="GO:0005654">
    <property type="term" value="C:nucleoplasm"/>
    <property type="evidence" value="ECO:0000314"/>
    <property type="project" value="HPA"/>
</dbReference>
<dbReference type="GO" id="GO:0005524">
    <property type="term" value="F:ATP binding"/>
    <property type="evidence" value="ECO:0007669"/>
    <property type="project" value="UniProtKB-KW"/>
</dbReference>
<dbReference type="GO" id="GO:0016887">
    <property type="term" value="F:ATP hydrolysis activity"/>
    <property type="evidence" value="ECO:0007669"/>
    <property type="project" value="InterPro"/>
</dbReference>
<dbReference type="GO" id="GO:0008094">
    <property type="term" value="F:ATP-dependent activity, acting on DNA"/>
    <property type="evidence" value="ECO:0000314"/>
    <property type="project" value="UniProtKB"/>
</dbReference>
<dbReference type="GO" id="GO:0003677">
    <property type="term" value="F:DNA binding"/>
    <property type="evidence" value="ECO:0007669"/>
    <property type="project" value="UniProtKB-KW"/>
</dbReference>
<dbReference type="GO" id="GO:0004386">
    <property type="term" value="F:helicase activity"/>
    <property type="evidence" value="ECO:0007669"/>
    <property type="project" value="UniProtKB-KW"/>
</dbReference>
<dbReference type="GO" id="GO:0017025">
    <property type="term" value="F:TBP-class protein binding"/>
    <property type="evidence" value="ECO:0007669"/>
    <property type="project" value="InterPro"/>
</dbReference>
<dbReference type="GO" id="GO:0003712">
    <property type="term" value="F:transcription coregulator activity"/>
    <property type="evidence" value="ECO:0000314"/>
    <property type="project" value="UniProtKB"/>
</dbReference>
<dbReference type="GO" id="GO:0035562">
    <property type="term" value="P:negative regulation of chromatin binding"/>
    <property type="evidence" value="ECO:0000315"/>
    <property type="project" value="MGI"/>
</dbReference>
<dbReference type="GO" id="GO:0045892">
    <property type="term" value="P:negative regulation of DNA-templated transcription"/>
    <property type="evidence" value="ECO:0000314"/>
    <property type="project" value="UniProtKB"/>
</dbReference>
<dbReference type="CDD" id="cd17999">
    <property type="entry name" value="DEXHc_Mot1"/>
    <property type="match status" value="1"/>
</dbReference>
<dbReference type="CDD" id="cd18793">
    <property type="entry name" value="SF2_C_SNF"/>
    <property type="match status" value="1"/>
</dbReference>
<dbReference type="FunFam" id="3.40.50.10810:FF:000009">
    <property type="entry name" value="B-TFIID TATA-box-binding protein-associated factor 1"/>
    <property type="match status" value="1"/>
</dbReference>
<dbReference type="FunFam" id="3.40.50.300:FF:000428">
    <property type="entry name" value="TATA-binding protein-associated factor 172"/>
    <property type="match status" value="1"/>
</dbReference>
<dbReference type="FunFam" id="1.25.10.10:FF:000101">
    <property type="entry name" value="TATA-binding protein-associated factor 172 isoform X2"/>
    <property type="match status" value="1"/>
</dbReference>
<dbReference type="FunFam" id="1.25.10.10:FF:000132">
    <property type="entry name" value="TATA-binding protein-associated factor 172 isoform X2"/>
    <property type="match status" value="1"/>
</dbReference>
<dbReference type="Gene3D" id="1.25.10.10">
    <property type="entry name" value="Leucine-rich Repeat Variant"/>
    <property type="match status" value="2"/>
</dbReference>
<dbReference type="Gene3D" id="3.40.50.300">
    <property type="entry name" value="P-loop containing nucleotide triphosphate hydrolases"/>
    <property type="match status" value="1"/>
</dbReference>
<dbReference type="Gene3D" id="3.40.50.10810">
    <property type="entry name" value="Tandem AAA-ATPase domain"/>
    <property type="match status" value="1"/>
</dbReference>
<dbReference type="InterPro" id="IPR011989">
    <property type="entry name" value="ARM-like"/>
</dbReference>
<dbReference type="InterPro" id="IPR016024">
    <property type="entry name" value="ARM-type_fold"/>
</dbReference>
<dbReference type="InterPro" id="IPR014001">
    <property type="entry name" value="Helicase_ATP-bd"/>
</dbReference>
<dbReference type="InterPro" id="IPR001650">
    <property type="entry name" value="Helicase_C-like"/>
</dbReference>
<dbReference type="InterPro" id="IPR044972">
    <property type="entry name" value="Mot1"/>
</dbReference>
<dbReference type="InterPro" id="IPR044078">
    <property type="entry name" value="Mot1_ATP-bd"/>
</dbReference>
<dbReference type="InterPro" id="IPR022707">
    <property type="entry name" value="Mot1_central_dom"/>
</dbReference>
<dbReference type="InterPro" id="IPR027417">
    <property type="entry name" value="P-loop_NTPase"/>
</dbReference>
<dbReference type="InterPro" id="IPR038718">
    <property type="entry name" value="SNF2-like_sf"/>
</dbReference>
<dbReference type="InterPro" id="IPR049730">
    <property type="entry name" value="SNF2/RAD54-like_C"/>
</dbReference>
<dbReference type="InterPro" id="IPR000330">
    <property type="entry name" value="SNF2_N"/>
</dbReference>
<dbReference type="PANTHER" id="PTHR36498">
    <property type="entry name" value="TATA-BINDING PROTEIN-ASSOCIATED FACTOR 172"/>
    <property type="match status" value="1"/>
</dbReference>
<dbReference type="PANTHER" id="PTHR36498:SF1">
    <property type="entry name" value="TATA-BINDING PROTEIN-ASSOCIATED FACTOR 172"/>
    <property type="match status" value="1"/>
</dbReference>
<dbReference type="Pfam" id="PF12054">
    <property type="entry name" value="DUF3535"/>
    <property type="match status" value="1"/>
</dbReference>
<dbReference type="Pfam" id="PF00271">
    <property type="entry name" value="Helicase_C"/>
    <property type="match status" value="1"/>
</dbReference>
<dbReference type="Pfam" id="PF00176">
    <property type="entry name" value="SNF2-rel_dom"/>
    <property type="match status" value="1"/>
</dbReference>
<dbReference type="SMART" id="SM00487">
    <property type="entry name" value="DEXDc"/>
    <property type="match status" value="1"/>
</dbReference>
<dbReference type="SMART" id="SM00490">
    <property type="entry name" value="HELICc"/>
    <property type="match status" value="1"/>
</dbReference>
<dbReference type="SUPFAM" id="SSF48371">
    <property type="entry name" value="ARM repeat"/>
    <property type="match status" value="1"/>
</dbReference>
<dbReference type="SUPFAM" id="SSF52540">
    <property type="entry name" value="P-loop containing nucleoside triphosphate hydrolases"/>
    <property type="match status" value="2"/>
</dbReference>
<dbReference type="PROSITE" id="PS51192">
    <property type="entry name" value="HELICASE_ATP_BIND_1"/>
    <property type="match status" value="1"/>
</dbReference>
<dbReference type="PROSITE" id="PS51194">
    <property type="entry name" value="HELICASE_CTER"/>
    <property type="match status" value="1"/>
</dbReference>
<proteinExistence type="evidence at protein level"/>
<sequence length="1849" mass="206887">MAVSRLDRLFILLDTGTTPVTRKAAAQQLGEVVKLHPHELNNLLSKVLIYLRSANWDTRIAAGQAVEAIVKNVPEWNPVPRTRQEPTSESSMEDSPTTERLNFDRFDICRLLQHGASLLGSAGAEFEVQDEKSGEVDPKERIARQRKLLQKKLGLNMGEAIGMSTEELFNDEDLDYTPTSASFVNKQPTLQAAELIDSEFRAGMSNRQKNKAKRMAKLFAKQRSRDAVETNEKSNDSTDGEPEEKRRKIANVVINQSANDSKVLIDNIPDSSSLIEETNEWPLESFCEELCNDLFNPSWEVRHGAGTGLREILKAHGKSGGKMGDSTLEEMIQQHQEWLEDLVIRLLCVFALDRFGDFVSDEVVAPVRETCAQTLGVVLKHMNETGVHKTVDVLLKLLTQEQWEVRHGGLLGIKYALAVRQDVINTLLPKVLTRIIEGLQDLDDDVRAVAAASLVPVVESLVYLQTQKVPFIINTLWDALLELDDLTASTNSIMTLLSSLLTYPQVQQCSIQQSLTVLVPRVWPFLHHTISSVRRAALETLFTLLSTQDQNSSSWLIPILPDMLRHIFQFCVLESSQEILDLIHKVWMELLSKASVQYVVAAACPWMGAWLCLMMQPSHLPIDLNMLLEVKARAKEKTGGKVRQGQSQNKEVLQEYIAGADTIMEDPATRDFVVMRARMMAAKLLGALCCCICDPGVNVVTQEIKPAESLGQLLLFHLNSKSALQRISVALVICEWAALQKECKAVTLAVQPRLLDILSEHLYYDEIAVPFTRMQNECKQLISSLADVHIEVGNRVNNNVLTIDQASDLVTTVFNEATSSFDLNPQVLQQLDSKRQQVQMTVTETNQEWQVLQLRVHTFAACAVVSLQQLPEKLNPIIKPLMETIKKEENTLVQNYAAQCIAKLLQQCTTRTPCPNSKIIKNLCSSLCVDPYLTPCVTCPVPTQSGQENSKGSTSEKDGMHHTVTKHRGIITLYRHQKAAFAITSRRGPTPKAVKAQIADLPAGSSGNILVELDEAQKPYLVQRRGAEFALTTIVKHFGGEMAVKLPHLWDAMVGPLRNTIDINNFDGKSLLDKGDSPAQELVNSLQVFETAAASMDSELHPLLVQHLPHLYMCLQYPSTAVRHMAARCVGVMSKIATMETMNIFLEKVLPWLGAIDDSVKQEGAIEALACVMEQLDVGIVPYIVLLVVPVLGRMSDQTDSVRFMATQCFATLIRLMPLEAGIPDPPNMSAELIQLKAKERHFLEQLLDGKKLENYKIPVPINAELRKYQQDGVNWLAFLNKYKLHGILCDDMGLGKTLQSICILAGDHCHRAQEYARSKLAECMPLPSLVVCPPTLTGHWVDEVGKFCSREYLNPLHYTGPPTERIRLQHQVKRHNLIVASYDVVRNDIDFFRNIKFNYCILDEGHVIKNGKTKLSKAVKQLTANYRIILSGTPIQNNVLELWSLFDFLMPGFLGTERQFAARYGKPILASRDARSSSREQEAGVLAMDALHRQVLPFLLRRMKEDVLQDLPPKIIQDYYCTLSPLQVQLYEDFAKSRAKCDVDETVSSATLSEETEKPKLKATGHVFQALQYLRKLCNHPALVLTPQHPEFKTTAEKLAVQNSSLHDIQHAPKLSALKQLLLDCGLGNGSTSESGTESVVAQHRILIFCQLKSMLDIVEHDLLKPHLPSVTYLRLDGSIPPGQRHSIVSRFNNDPSIDVLLLTTHVGGLGLNLTGADTVVFVEHDWNPMRDLQAMDRAHRIGQKRVVNVYRLITRGTLEEKIMGLQKFKMNIANTVISQENSSLQSMGTDQLLDLFTLDKDGKAEKADTSTSGKASMKSILENLSDLWDQEQYDSEYSLENFMHSLK</sequence>
<evidence type="ECO:0000255" key="1"/>
<evidence type="ECO:0000255" key="2">
    <source>
        <dbReference type="PROSITE-ProRule" id="PRU00541"/>
    </source>
</evidence>
<evidence type="ECO:0000255" key="3">
    <source>
        <dbReference type="PROSITE-ProRule" id="PRU00542"/>
    </source>
</evidence>
<evidence type="ECO:0000256" key="4">
    <source>
        <dbReference type="SAM" id="MobiDB-lite"/>
    </source>
</evidence>
<evidence type="ECO:0000303" key="5">
    <source>
    </source>
</evidence>
<evidence type="ECO:0000305" key="6"/>
<evidence type="ECO:0007744" key="7">
    <source>
    </source>
</evidence>
<name>BTAF1_HUMAN</name>
<protein>
    <recommendedName>
        <fullName>TATA-binding protein-associated factor 172</fullName>
        <ecNumber>3.6.4.-</ecNumber>
    </recommendedName>
    <alternativeName>
        <fullName>ATP-dependent helicase BTAF1</fullName>
    </alternativeName>
    <alternativeName>
        <fullName>B-TFIID transcription factor-associated 170 kDa subunit</fullName>
    </alternativeName>
    <alternativeName>
        <fullName>TAF(II)170</fullName>
    </alternativeName>
    <alternativeName>
        <fullName>TBP-associated factor 172</fullName>
        <shortName>TAF-172</shortName>
    </alternativeName>
</protein>
<reference key="1">
    <citation type="journal article" date="1997" name="Proc. Natl. Acad. Sci. U.S.A.">
        <title>Cloning of the cDNA for the TATA-binding protein-associated factorII170 subunit of transcription factor B-TFIID reveals homology to global transcription regulators in yeast and Drosophila.</title>
        <authorList>
            <person name="van der Knaap J.A."/>
            <person name="Borst J.W."/>
            <person name="van der Vliet P.C."/>
            <person name="Gentz R."/>
            <person name="Timmers H.T.M."/>
        </authorList>
    </citation>
    <scope>NUCLEOTIDE SEQUENCE [MRNA] (ISOFORM 1)</scope>
</reference>
<reference key="2">
    <citation type="journal article" date="1998" name="Mol. Cell. Biol.">
        <title>Cloning and biochemical characterization of TAF-172, a human homolog of yeast Mot1.</title>
        <authorList>
            <person name="Chicca J.J. II"/>
            <person name="Auble D.T."/>
            <person name="Pugh B.F."/>
        </authorList>
    </citation>
    <scope>NUCLEOTIDE SEQUENCE [MRNA] (ISOFORM 1)</scope>
    <scope>PARTIAL PROTEIN SEQUENCE</scope>
</reference>
<reference key="3">
    <citation type="journal article" date="2004" name="Nat. Genet.">
        <title>Complete sequencing and characterization of 21,243 full-length human cDNAs.</title>
        <authorList>
            <person name="Ota T."/>
            <person name="Suzuki Y."/>
            <person name="Nishikawa T."/>
            <person name="Otsuki T."/>
            <person name="Sugiyama T."/>
            <person name="Irie R."/>
            <person name="Wakamatsu A."/>
            <person name="Hayashi K."/>
            <person name="Sato H."/>
            <person name="Nagai K."/>
            <person name="Kimura K."/>
            <person name="Makita H."/>
            <person name="Sekine M."/>
            <person name="Obayashi M."/>
            <person name="Nishi T."/>
            <person name="Shibahara T."/>
            <person name="Tanaka T."/>
            <person name="Ishii S."/>
            <person name="Yamamoto J."/>
            <person name="Saito K."/>
            <person name="Kawai Y."/>
            <person name="Isono Y."/>
            <person name="Nakamura Y."/>
            <person name="Nagahari K."/>
            <person name="Murakami K."/>
            <person name="Yasuda T."/>
            <person name="Iwayanagi T."/>
            <person name="Wagatsuma M."/>
            <person name="Shiratori A."/>
            <person name="Sudo H."/>
            <person name="Hosoiri T."/>
            <person name="Kaku Y."/>
            <person name="Kodaira H."/>
            <person name="Kondo H."/>
            <person name="Sugawara M."/>
            <person name="Takahashi M."/>
            <person name="Kanda K."/>
            <person name="Yokoi T."/>
            <person name="Furuya T."/>
            <person name="Kikkawa E."/>
            <person name="Omura Y."/>
            <person name="Abe K."/>
            <person name="Kamihara K."/>
            <person name="Katsuta N."/>
            <person name="Sato K."/>
            <person name="Tanikawa M."/>
            <person name="Yamazaki M."/>
            <person name="Ninomiya K."/>
            <person name="Ishibashi T."/>
            <person name="Yamashita H."/>
            <person name="Murakawa K."/>
            <person name="Fujimori K."/>
            <person name="Tanai H."/>
            <person name="Kimata M."/>
            <person name="Watanabe M."/>
            <person name="Hiraoka S."/>
            <person name="Chiba Y."/>
            <person name="Ishida S."/>
            <person name="Ono Y."/>
            <person name="Takiguchi S."/>
            <person name="Watanabe S."/>
            <person name="Yosida M."/>
            <person name="Hotuta T."/>
            <person name="Kusano J."/>
            <person name="Kanehori K."/>
            <person name="Takahashi-Fujii A."/>
            <person name="Hara H."/>
            <person name="Tanase T.-O."/>
            <person name="Nomura Y."/>
            <person name="Togiya S."/>
            <person name="Komai F."/>
            <person name="Hara R."/>
            <person name="Takeuchi K."/>
            <person name="Arita M."/>
            <person name="Imose N."/>
            <person name="Musashino K."/>
            <person name="Yuuki H."/>
            <person name="Oshima A."/>
            <person name="Sasaki N."/>
            <person name="Aotsuka S."/>
            <person name="Yoshikawa Y."/>
            <person name="Matsunawa H."/>
            <person name="Ichihara T."/>
            <person name="Shiohata N."/>
            <person name="Sano S."/>
            <person name="Moriya S."/>
            <person name="Momiyama H."/>
            <person name="Satoh N."/>
            <person name="Takami S."/>
            <person name="Terashima Y."/>
            <person name="Suzuki O."/>
            <person name="Nakagawa S."/>
            <person name="Senoh A."/>
            <person name="Mizoguchi H."/>
            <person name="Goto Y."/>
            <person name="Shimizu F."/>
            <person name="Wakebe H."/>
            <person name="Hishigaki H."/>
            <person name="Watanabe T."/>
            <person name="Sugiyama A."/>
            <person name="Takemoto M."/>
            <person name="Kawakami B."/>
            <person name="Yamazaki M."/>
            <person name="Watanabe K."/>
            <person name="Kumagai A."/>
            <person name="Itakura S."/>
            <person name="Fukuzumi Y."/>
            <person name="Fujimori Y."/>
            <person name="Komiyama M."/>
            <person name="Tashiro H."/>
            <person name="Tanigami A."/>
            <person name="Fujiwara T."/>
            <person name="Ono T."/>
            <person name="Yamada K."/>
            <person name="Fujii Y."/>
            <person name="Ozaki K."/>
            <person name="Hirao M."/>
            <person name="Ohmori Y."/>
            <person name="Kawabata A."/>
            <person name="Hikiji T."/>
            <person name="Kobatake N."/>
            <person name="Inagaki H."/>
            <person name="Ikema Y."/>
            <person name="Okamoto S."/>
            <person name="Okitani R."/>
            <person name="Kawakami T."/>
            <person name="Noguchi S."/>
            <person name="Itoh T."/>
            <person name="Shigeta K."/>
            <person name="Senba T."/>
            <person name="Matsumura K."/>
            <person name="Nakajima Y."/>
            <person name="Mizuno T."/>
            <person name="Morinaga M."/>
            <person name="Sasaki M."/>
            <person name="Togashi T."/>
            <person name="Oyama M."/>
            <person name="Hata H."/>
            <person name="Watanabe M."/>
            <person name="Komatsu T."/>
            <person name="Mizushima-Sugano J."/>
            <person name="Satoh T."/>
            <person name="Shirai Y."/>
            <person name="Takahashi Y."/>
            <person name="Nakagawa K."/>
            <person name="Okumura K."/>
            <person name="Nagase T."/>
            <person name="Nomura N."/>
            <person name="Kikuchi H."/>
            <person name="Masuho Y."/>
            <person name="Yamashita R."/>
            <person name="Nakai K."/>
            <person name="Yada T."/>
            <person name="Nakamura Y."/>
            <person name="Ohara O."/>
            <person name="Isogai T."/>
            <person name="Sugano S."/>
        </authorList>
    </citation>
    <scope>NUCLEOTIDE SEQUENCE [LARGE SCALE MRNA] (ISOFORM 2)</scope>
    <source>
        <tissue>Thymus</tissue>
    </source>
</reference>
<reference key="4">
    <citation type="journal article" date="2004" name="Nature">
        <title>The DNA sequence and comparative analysis of human chromosome 10.</title>
        <authorList>
            <person name="Deloukas P."/>
            <person name="Earthrowl M.E."/>
            <person name="Grafham D.V."/>
            <person name="Rubenfield M."/>
            <person name="French L."/>
            <person name="Steward C.A."/>
            <person name="Sims S.K."/>
            <person name="Jones M.C."/>
            <person name="Searle S."/>
            <person name="Scott C."/>
            <person name="Howe K."/>
            <person name="Hunt S.E."/>
            <person name="Andrews T.D."/>
            <person name="Gilbert J.G.R."/>
            <person name="Swarbreck D."/>
            <person name="Ashurst J.L."/>
            <person name="Taylor A."/>
            <person name="Battles J."/>
            <person name="Bird C.P."/>
            <person name="Ainscough R."/>
            <person name="Almeida J.P."/>
            <person name="Ashwell R.I.S."/>
            <person name="Ambrose K.D."/>
            <person name="Babbage A.K."/>
            <person name="Bagguley C.L."/>
            <person name="Bailey J."/>
            <person name="Banerjee R."/>
            <person name="Bates K."/>
            <person name="Beasley H."/>
            <person name="Bray-Allen S."/>
            <person name="Brown A.J."/>
            <person name="Brown J.Y."/>
            <person name="Burford D.C."/>
            <person name="Burrill W."/>
            <person name="Burton J."/>
            <person name="Cahill P."/>
            <person name="Camire D."/>
            <person name="Carter N.P."/>
            <person name="Chapman J.C."/>
            <person name="Clark S.Y."/>
            <person name="Clarke G."/>
            <person name="Clee C.M."/>
            <person name="Clegg S."/>
            <person name="Corby N."/>
            <person name="Coulson A."/>
            <person name="Dhami P."/>
            <person name="Dutta I."/>
            <person name="Dunn M."/>
            <person name="Faulkner L."/>
            <person name="Frankish A."/>
            <person name="Frankland J.A."/>
            <person name="Garner P."/>
            <person name="Garnett J."/>
            <person name="Gribble S."/>
            <person name="Griffiths C."/>
            <person name="Grocock R."/>
            <person name="Gustafson E."/>
            <person name="Hammond S."/>
            <person name="Harley J.L."/>
            <person name="Hart E."/>
            <person name="Heath P.D."/>
            <person name="Ho T.P."/>
            <person name="Hopkins B."/>
            <person name="Horne J."/>
            <person name="Howden P.J."/>
            <person name="Huckle E."/>
            <person name="Hynds C."/>
            <person name="Johnson C."/>
            <person name="Johnson D."/>
            <person name="Kana A."/>
            <person name="Kay M."/>
            <person name="Kimberley A.M."/>
            <person name="Kershaw J.K."/>
            <person name="Kokkinaki M."/>
            <person name="Laird G.K."/>
            <person name="Lawlor S."/>
            <person name="Lee H.M."/>
            <person name="Leongamornlert D.A."/>
            <person name="Laird G."/>
            <person name="Lloyd C."/>
            <person name="Lloyd D.M."/>
            <person name="Loveland J."/>
            <person name="Lovell J."/>
            <person name="McLaren S."/>
            <person name="McLay K.E."/>
            <person name="McMurray A."/>
            <person name="Mashreghi-Mohammadi M."/>
            <person name="Matthews L."/>
            <person name="Milne S."/>
            <person name="Nickerson T."/>
            <person name="Nguyen M."/>
            <person name="Overton-Larty E."/>
            <person name="Palmer S.A."/>
            <person name="Pearce A.V."/>
            <person name="Peck A.I."/>
            <person name="Pelan S."/>
            <person name="Phillimore B."/>
            <person name="Porter K."/>
            <person name="Rice C.M."/>
            <person name="Rogosin A."/>
            <person name="Ross M.T."/>
            <person name="Sarafidou T."/>
            <person name="Sehra H.K."/>
            <person name="Shownkeen R."/>
            <person name="Skuce C.D."/>
            <person name="Smith M."/>
            <person name="Standring L."/>
            <person name="Sycamore N."/>
            <person name="Tester J."/>
            <person name="Thorpe A."/>
            <person name="Torcasso W."/>
            <person name="Tracey A."/>
            <person name="Tromans A."/>
            <person name="Tsolas J."/>
            <person name="Wall M."/>
            <person name="Walsh J."/>
            <person name="Wang H."/>
            <person name="Weinstock K."/>
            <person name="West A.P."/>
            <person name="Willey D.L."/>
            <person name="Whitehead S.L."/>
            <person name="Wilming L."/>
            <person name="Wray P.W."/>
            <person name="Young L."/>
            <person name="Chen Y."/>
            <person name="Lovering R.C."/>
            <person name="Moschonas N.K."/>
            <person name="Siebert R."/>
            <person name="Fechtel K."/>
            <person name="Bentley D."/>
            <person name="Durbin R.M."/>
            <person name="Hubbard T."/>
            <person name="Doucette-Stamm L."/>
            <person name="Beck S."/>
            <person name="Smith D.R."/>
            <person name="Rogers J."/>
        </authorList>
    </citation>
    <scope>NUCLEOTIDE SEQUENCE [LARGE SCALE GENOMIC DNA]</scope>
</reference>
<reference key="5">
    <citation type="journal article" date="2000" name="Biochem. J.">
        <title>The gene for human TATA-binding-protein-associated factor (TAFII) 170: structure, promoter and chromosomal localization.</title>
        <authorList>
            <person name="Van Der Knaap J.A."/>
            <person name="Van Den Boom V."/>
            <person name="Kuipers J."/>
            <person name="Van Eijk M.J.T."/>
            <person name="Van Der Vliet P.C."/>
            <person name="Timmers H.T.M."/>
        </authorList>
    </citation>
    <scope>NUCLEOTIDE SEQUENCE [GENOMIC DNA] OF 301-330</scope>
</reference>
<reference key="6">
    <citation type="journal article" date="2004" name="Mol. Cell. Biol.">
        <title>NC2alpha interacts with BTAF1 and stimulates its ATP-dependent association with TATA-binding protein.</title>
        <authorList>
            <person name="Klejman M.P."/>
            <person name="Pereira L.A."/>
            <person name="van Zeeburg H.J.T."/>
            <person name="Gilfillan S."/>
            <person name="Meisterernst M."/>
            <person name="Timmers H.T.M."/>
        </authorList>
    </citation>
    <scope>INTERACTION WITH DRAP1</scope>
</reference>
<reference key="7">
    <citation type="journal article" date="2011" name="BMC Syst. Biol.">
        <title>Initial characterization of the human central proteome.</title>
        <authorList>
            <person name="Burkard T.R."/>
            <person name="Planyavsky M."/>
            <person name="Kaupe I."/>
            <person name="Breitwieser F.P."/>
            <person name="Buerckstuemmer T."/>
            <person name="Bennett K.L."/>
            <person name="Superti-Furga G."/>
            <person name="Colinge J."/>
        </authorList>
    </citation>
    <scope>IDENTIFICATION BY MASS SPECTROMETRY [LARGE SCALE ANALYSIS]</scope>
</reference>
<reference key="8">
    <citation type="journal article" date="2013" name="J. Proteome Res.">
        <title>Toward a comprehensive characterization of a human cancer cell phosphoproteome.</title>
        <authorList>
            <person name="Zhou H."/>
            <person name="Di Palma S."/>
            <person name="Preisinger C."/>
            <person name="Peng M."/>
            <person name="Polat A.N."/>
            <person name="Heck A.J."/>
            <person name="Mohammed S."/>
        </authorList>
    </citation>
    <scope>PHOSPHORYLATION [LARGE SCALE ANALYSIS] AT SER-91 AND SER-95</scope>
    <scope>IDENTIFICATION BY MASS SPECTROMETRY [LARGE SCALE ANALYSIS]</scope>
    <source>
        <tissue>Cervix carcinoma</tissue>
        <tissue>Erythroleukemia</tissue>
    </source>
</reference>
<organism>
    <name type="scientific">Homo sapiens</name>
    <name type="common">Human</name>
    <dbReference type="NCBI Taxonomy" id="9606"/>
    <lineage>
        <taxon>Eukaryota</taxon>
        <taxon>Metazoa</taxon>
        <taxon>Chordata</taxon>
        <taxon>Craniata</taxon>
        <taxon>Vertebrata</taxon>
        <taxon>Euteleostomi</taxon>
        <taxon>Mammalia</taxon>
        <taxon>Eutheria</taxon>
        <taxon>Euarchontoglires</taxon>
        <taxon>Primates</taxon>
        <taxon>Haplorrhini</taxon>
        <taxon>Catarrhini</taxon>
        <taxon>Hominidae</taxon>
        <taxon>Homo</taxon>
    </lineage>
</organism>
<gene>
    <name type="primary">BTAF1</name>
    <name type="synonym">TAF172</name>
</gene>